<gene>
    <name evidence="2" type="primary">trmB</name>
    <name type="ordered locus">SEQ_0509</name>
</gene>
<organism>
    <name type="scientific">Streptococcus equi subsp. equi (strain 4047)</name>
    <dbReference type="NCBI Taxonomy" id="553482"/>
    <lineage>
        <taxon>Bacteria</taxon>
        <taxon>Bacillati</taxon>
        <taxon>Bacillota</taxon>
        <taxon>Bacilli</taxon>
        <taxon>Lactobacillales</taxon>
        <taxon>Streptococcaceae</taxon>
        <taxon>Streptococcus</taxon>
    </lineage>
</organism>
<evidence type="ECO:0000250" key="1"/>
<evidence type="ECO:0000255" key="2">
    <source>
        <dbReference type="HAMAP-Rule" id="MF_01057"/>
    </source>
</evidence>
<sequence>MRVRKRKGAQEHLENNPHYVILEPEAAKGRWCEVFGNDHPIHIEVGSGKGAFITGMALKNPEINYIGIDIQLSVLSYALDKVLASQAPNVRLLRVDGSSLTNYFDAGEVDMMYLNFSDPWPKSRHEKRRLTYKSFLDTYKQILPENGEIHFKTDNRGLFEYSLASFSQYGMTLKQVWLDLHASDYQGNVMTEYEARFAKKGQIIYRLEATF</sequence>
<feature type="chain" id="PRO_1000149664" description="tRNA (guanine-N(7)-)-methyltransferase">
    <location>
        <begin position="1"/>
        <end position="211"/>
    </location>
</feature>
<feature type="region of interest" description="Interaction with RNA" evidence="2">
    <location>
        <begin position="124"/>
        <end position="129"/>
    </location>
</feature>
<feature type="active site" evidence="1">
    <location>
        <position position="118"/>
    </location>
</feature>
<feature type="binding site" evidence="2">
    <location>
        <position position="44"/>
    </location>
    <ligand>
        <name>S-adenosyl-L-methionine</name>
        <dbReference type="ChEBI" id="CHEBI:59789"/>
    </ligand>
</feature>
<feature type="binding site" evidence="2">
    <location>
        <position position="69"/>
    </location>
    <ligand>
        <name>S-adenosyl-L-methionine</name>
        <dbReference type="ChEBI" id="CHEBI:59789"/>
    </ligand>
</feature>
<feature type="binding site" evidence="2">
    <location>
        <position position="96"/>
    </location>
    <ligand>
        <name>S-adenosyl-L-methionine</name>
        <dbReference type="ChEBI" id="CHEBI:59789"/>
    </ligand>
</feature>
<feature type="binding site" evidence="2">
    <location>
        <position position="118"/>
    </location>
    <ligand>
        <name>S-adenosyl-L-methionine</name>
        <dbReference type="ChEBI" id="CHEBI:59789"/>
    </ligand>
</feature>
<feature type="binding site" evidence="2">
    <location>
        <position position="122"/>
    </location>
    <ligand>
        <name>substrate</name>
    </ligand>
</feature>
<feature type="binding site" evidence="2">
    <location>
        <position position="154"/>
    </location>
    <ligand>
        <name>substrate</name>
    </ligand>
</feature>
<feature type="binding site" evidence="2">
    <location>
        <begin position="191"/>
        <end position="194"/>
    </location>
    <ligand>
        <name>substrate</name>
    </ligand>
</feature>
<name>TRMB_STRE4</name>
<comment type="function">
    <text evidence="2">Catalyzes the formation of N(7)-methylguanine at position 46 (m7G46) in tRNA.</text>
</comment>
<comment type="catalytic activity">
    <reaction evidence="2">
        <text>guanosine(46) in tRNA + S-adenosyl-L-methionine = N(7)-methylguanosine(46) in tRNA + S-adenosyl-L-homocysteine</text>
        <dbReference type="Rhea" id="RHEA:42708"/>
        <dbReference type="Rhea" id="RHEA-COMP:10188"/>
        <dbReference type="Rhea" id="RHEA-COMP:10189"/>
        <dbReference type="ChEBI" id="CHEBI:57856"/>
        <dbReference type="ChEBI" id="CHEBI:59789"/>
        <dbReference type="ChEBI" id="CHEBI:74269"/>
        <dbReference type="ChEBI" id="CHEBI:74480"/>
        <dbReference type="EC" id="2.1.1.33"/>
    </reaction>
</comment>
<comment type="pathway">
    <text evidence="2">tRNA modification; N(7)-methylguanine-tRNA biosynthesis.</text>
</comment>
<comment type="similarity">
    <text evidence="2">Belongs to the class I-like SAM-binding methyltransferase superfamily. TrmB family.</text>
</comment>
<proteinExistence type="inferred from homology"/>
<keyword id="KW-0489">Methyltransferase</keyword>
<keyword id="KW-0949">S-adenosyl-L-methionine</keyword>
<keyword id="KW-0808">Transferase</keyword>
<keyword id="KW-0819">tRNA processing</keyword>
<reference key="1">
    <citation type="journal article" date="2009" name="PLoS Pathog.">
        <title>Genomic evidence for the evolution of Streptococcus equi: host restriction, increased virulence, and genetic exchange with human pathogens.</title>
        <authorList>
            <person name="Holden M.T.G."/>
            <person name="Heather Z."/>
            <person name="Paillot R."/>
            <person name="Steward K.F."/>
            <person name="Webb K."/>
            <person name="Ainslie F."/>
            <person name="Jourdan T."/>
            <person name="Bason N.C."/>
            <person name="Holroyd N.E."/>
            <person name="Mungall K."/>
            <person name="Quail M.A."/>
            <person name="Sanders M."/>
            <person name="Simmonds M."/>
            <person name="Willey D."/>
            <person name="Brooks K."/>
            <person name="Aanensen D.M."/>
            <person name="Spratt B.G."/>
            <person name="Jolley K.A."/>
            <person name="Maiden M.C.J."/>
            <person name="Kehoe M."/>
            <person name="Chanter N."/>
            <person name="Bentley S.D."/>
            <person name="Robinson C."/>
            <person name="Maskell D.J."/>
            <person name="Parkhill J."/>
            <person name="Waller A.S."/>
        </authorList>
    </citation>
    <scope>NUCLEOTIDE SEQUENCE [LARGE SCALE GENOMIC DNA]</scope>
    <source>
        <strain>4047</strain>
    </source>
</reference>
<accession>C0M8F7</accession>
<protein>
    <recommendedName>
        <fullName evidence="2">tRNA (guanine-N(7)-)-methyltransferase</fullName>
        <ecNumber evidence="2">2.1.1.33</ecNumber>
    </recommendedName>
    <alternativeName>
        <fullName evidence="2">tRNA (guanine(46)-N(7))-methyltransferase</fullName>
    </alternativeName>
    <alternativeName>
        <fullName evidence="2">tRNA(m7G46)-methyltransferase</fullName>
    </alternativeName>
</protein>
<dbReference type="EC" id="2.1.1.33" evidence="2"/>
<dbReference type="EMBL" id="FM204883">
    <property type="protein sequence ID" value="CAW92734.1"/>
    <property type="molecule type" value="Genomic_DNA"/>
</dbReference>
<dbReference type="RefSeq" id="WP_012679098.1">
    <property type="nucleotide sequence ID" value="NC_012471.1"/>
</dbReference>
<dbReference type="SMR" id="C0M8F7"/>
<dbReference type="KEGG" id="seu:SEQ_0509"/>
<dbReference type="HOGENOM" id="CLU_050910_2_1_9"/>
<dbReference type="OrthoDB" id="9802090at2"/>
<dbReference type="UniPathway" id="UPA00989"/>
<dbReference type="Proteomes" id="UP000001365">
    <property type="component" value="Chromosome"/>
</dbReference>
<dbReference type="GO" id="GO:0043527">
    <property type="term" value="C:tRNA methyltransferase complex"/>
    <property type="evidence" value="ECO:0007669"/>
    <property type="project" value="TreeGrafter"/>
</dbReference>
<dbReference type="GO" id="GO:0008176">
    <property type="term" value="F:tRNA (guanine(46)-N7)-methyltransferase activity"/>
    <property type="evidence" value="ECO:0007669"/>
    <property type="project" value="UniProtKB-UniRule"/>
</dbReference>
<dbReference type="CDD" id="cd02440">
    <property type="entry name" value="AdoMet_MTases"/>
    <property type="match status" value="1"/>
</dbReference>
<dbReference type="FunFam" id="3.40.50.150:FF:000035">
    <property type="entry name" value="tRNA (guanine-N(7)-)-methyltransferase"/>
    <property type="match status" value="1"/>
</dbReference>
<dbReference type="Gene3D" id="3.40.50.150">
    <property type="entry name" value="Vaccinia Virus protein VP39"/>
    <property type="match status" value="1"/>
</dbReference>
<dbReference type="HAMAP" id="MF_01057">
    <property type="entry name" value="tRNA_methyltr_TrmB"/>
    <property type="match status" value="1"/>
</dbReference>
<dbReference type="InterPro" id="IPR029063">
    <property type="entry name" value="SAM-dependent_MTases_sf"/>
</dbReference>
<dbReference type="InterPro" id="IPR003358">
    <property type="entry name" value="tRNA_(Gua-N-7)_MeTrfase_Trmb"/>
</dbReference>
<dbReference type="InterPro" id="IPR055361">
    <property type="entry name" value="tRNA_methyltr_TrmB_bact"/>
</dbReference>
<dbReference type="NCBIfam" id="NF001080">
    <property type="entry name" value="PRK00121.2-2"/>
    <property type="match status" value="1"/>
</dbReference>
<dbReference type="NCBIfam" id="TIGR00091">
    <property type="entry name" value="tRNA (guanosine(46)-N7)-methyltransferase TrmB"/>
    <property type="match status" value="1"/>
</dbReference>
<dbReference type="PANTHER" id="PTHR23417">
    <property type="entry name" value="3-DEOXY-D-MANNO-OCTULOSONIC-ACID TRANSFERASE/TRNA GUANINE-N 7 - -METHYLTRANSFERASE"/>
    <property type="match status" value="1"/>
</dbReference>
<dbReference type="PANTHER" id="PTHR23417:SF14">
    <property type="entry name" value="PENTACOTRIPEPTIDE-REPEAT REGION OF PRORP DOMAIN-CONTAINING PROTEIN"/>
    <property type="match status" value="1"/>
</dbReference>
<dbReference type="Pfam" id="PF02390">
    <property type="entry name" value="Methyltransf_4"/>
    <property type="match status" value="1"/>
</dbReference>
<dbReference type="SUPFAM" id="SSF53335">
    <property type="entry name" value="S-adenosyl-L-methionine-dependent methyltransferases"/>
    <property type="match status" value="1"/>
</dbReference>
<dbReference type="PROSITE" id="PS51625">
    <property type="entry name" value="SAM_MT_TRMB"/>
    <property type="match status" value="1"/>
</dbReference>